<sequence>MLNKKEQRLRRSRQTRARIALQGVERLTVFRTNLHIYASVISADGGKVLASASTAEKEVRAQLGVAGKGACVDAAQLIGKRIAERAKAAGVEKVAFDRSGFAYHGRVKALAEAAREAGLQF</sequence>
<evidence type="ECO:0000255" key="1">
    <source>
        <dbReference type="HAMAP-Rule" id="MF_01337"/>
    </source>
</evidence>
<evidence type="ECO:0000305" key="2"/>
<reference key="1">
    <citation type="submission" date="2008-03" db="EMBL/GenBank/DDBJ databases">
        <title>Complete sequence of Leptothrix cholodnii SP-6.</title>
        <authorList>
            <consortium name="US DOE Joint Genome Institute"/>
            <person name="Copeland A."/>
            <person name="Lucas S."/>
            <person name="Lapidus A."/>
            <person name="Glavina del Rio T."/>
            <person name="Dalin E."/>
            <person name="Tice H."/>
            <person name="Bruce D."/>
            <person name="Goodwin L."/>
            <person name="Pitluck S."/>
            <person name="Chertkov O."/>
            <person name="Brettin T."/>
            <person name="Detter J.C."/>
            <person name="Han C."/>
            <person name="Kuske C.R."/>
            <person name="Schmutz J."/>
            <person name="Larimer F."/>
            <person name="Land M."/>
            <person name="Hauser L."/>
            <person name="Kyrpides N."/>
            <person name="Lykidis A."/>
            <person name="Emerson D."/>
            <person name="Richardson P."/>
        </authorList>
    </citation>
    <scope>NUCLEOTIDE SEQUENCE [LARGE SCALE GENOMIC DNA]</scope>
    <source>
        <strain>ATCC 51168 / LMG 8142 / SP-6</strain>
    </source>
</reference>
<name>RL18_LEPCP</name>
<keyword id="KW-1185">Reference proteome</keyword>
<keyword id="KW-0687">Ribonucleoprotein</keyword>
<keyword id="KW-0689">Ribosomal protein</keyword>
<keyword id="KW-0694">RNA-binding</keyword>
<keyword id="KW-0699">rRNA-binding</keyword>
<feature type="chain" id="PRO_1000142684" description="Large ribosomal subunit protein uL18">
    <location>
        <begin position="1"/>
        <end position="121"/>
    </location>
</feature>
<protein>
    <recommendedName>
        <fullName evidence="1">Large ribosomal subunit protein uL18</fullName>
    </recommendedName>
    <alternativeName>
        <fullName evidence="2">50S ribosomal protein L18</fullName>
    </alternativeName>
</protein>
<gene>
    <name evidence="1" type="primary">rplR</name>
    <name type="ordered locus">Lcho_3933</name>
</gene>
<accession>B1Y8C1</accession>
<dbReference type="EMBL" id="CP001013">
    <property type="protein sequence ID" value="ACB36187.1"/>
    <property type="molecule type" value="Genomic_DNA"/>
</dbReference>
<dbReference type="RefSeq" id="WP_012348932.1">
    <property type="nucleotide sequence ID" value="NC_010524.1"/>
</dbReference>
<dbReference type="SMR" id="B1Y8C1"/>
<dbReference type="STRING" id="395495.Lcho_3933"/>
<dbReference type="KEGG" id="lch:Lcho_3933"/>
<dbReference type="eggNOG" id="COG0256">
    <property type="taxonomic scope" value="Bacteria"/>
</dbReference>
<dbReference type="HOGENOM" id="CLU_098841_0_1_4"/>
<dbReference type="OrthoDB" id="9810939at2"/>
<dbReference type="Proteomes" id="UP000001693">
    <property type="component" value="Chromosome"/>
</dbReference>
<dbReference type="GO" id="GO:0022625">
    <property type="term" value="C:cytosolic large ribosomal subunit"/>
    <property type="evidence" value="ECO:0007669"/>
    <property type="project" value="TreeGrafter"/>
</dbReference>
<dbReference type="GO" id="GO:0008097">
    <property type="term" value="F:5S rRNA binding"/>
    <property type="evidence" value="ECO:0007669"/>
    <property type="project" value="TreeGrafter"/>
</dbReference>
<dbReference type="GO" id="GO:0003735">
    <property type="term" value="F:structural constituent of ribosome"/>
    <property type="evidence" value="ECO:0007669"/>
    <property type="project" value="InterPro"/>
</dbReference>
<dbReference type="GO" id="GO:0006412">
    <property type="term" value="P:translation"/>
    <property type="evidence" value="ECO:0007669"/>
    <property type="project" value="UniProtKB-UniRule"/>
</dbReference>
<dbReference type="CDD" id="cd00432">
    <property type="entry name" value="Ribosomal_L18_L5e"/>
    <property type="match status" value="1"/>
</dbReference>
<dbReference type="FunFam" id="3.30.420.100:FF:000001">
    <property type="entry name" value="50S ribosomal protein L18"/>
    <property type="match status" value="1"/>
</dbReference>
<dbReference type="Gene3D" id="3.30.420.100">
    <property type="match status" value="1"/>
</dbReference>
<dbReference type="HAMAP" id="MF_01337_B">
    <property type="entry name" value="Ribosomal_uL18_B"/>
    <property type="match status" value="1"/>
</dbReference>
<dbReference type="InterPro" id="IPR004389">
    <property type="entry name" value="Ribosomal_uL18_bac-type"/>
</dbReference>
<dbReference type="InterPro" id="IPR005484">
    <property type="entry name" value="Ribosomal_uL18_bac/euk"/>
</dbReference>
<dbReference type="NCBIfam" id="TIGR00060">
    <property type="entry name" value="L18_bact"/>
    <property type="match status" value="1"/>
</dbReference>
<dbReference type="PANTHER" id="PTHR12899">
    <property type="entry name" value="39S RIBOSOMAL PROTEIN L18, MITOCHONDRIAL"/>
    <property type="match status" value="1"/>
</dbReference>
<dbReference type="PANTHER" id="PTHR12899:SF3">
    <property type="entry name" value="LARGE RIBOSOMAL SUBUNIT PROTEIN UL18M"/>
    <property type="match status" value="1"/>
</dbReference>
<dbReference type="Pfam" id="PF00861">
    <property type="entry name" value="Ribosomal_L18p"/>
    <property type="match status" value="1"/>
</dbReference>
<dbReference type="SUPFAM" id="SSF53137">
    <property type="entry name" value="Translational machinery components"/>
    <property type="match status" value="1"/>
</dbReference>
<proteinExistence type="inferred from homology"/>
<comment type="function">
    <text evidence="1">This is one of the proteins that bind and probably mediate the attachment of the 5S RNA into the large ribosomal subunit, where it forms part of the central protuberance.</text>
</comment>
<comment type="subunit">
    <text evidence="1">Part of the 50S ribosomal subunit; part of the 5S rRNA/L5/L18/L25 subcomplex. Contacts the 5S and 23S rRNAs.</text>
</comment>
<comment type="similarity">
    <text evidence="1">Belongs to the universal ribosomal protein uL18 family.</text>
</comment>
<organism>
    <name type="scientific">Leptothrix cholodnii (strain ATCC 51168 / LMG 8142 / SP-6)</name>
    <name type="common">Leptothrix discophora (strain SP-6)</name>
    <dbReference type="NCBI Taxonomy" id="395495"/>
    <lineage>
        <taxon>Bacteria</taxon>
        <taxon>Pseudomonadati</taxon>
        <taxon>Pseudomonadota</taxon>
        <taxon>Betaproteobacteria</taxon>
        <taxon>Burkholderiales</taxon>
        <taxon>Sphaerotilaceae</taxon>
        <taxon>Leptothrix</taxon>
    </lineage>
</organism>